<name>NOP15_YEAST</name>
<comment type="function">
    <text evidence="4 6">Involved in the biogenesis of the 60S ribosomal subunit. Required for pre-rRNA processing and cytokinesis. Associates with the precursors of the 25S and 5.8S rRNAs.</text>
</comment>
<comment type="subunit">
    <text evidence="4 6 7">Component of the pre-66S ribosomal particle. Interacts with NOP7 and RRP1.</text>
</comment>
<comment type="interaction">
    <interactant intactId="EBI-28853">
        <id>P53927</id>
    </interactant>
    <interactant intactId="EBI-24538">
        <id>P38779</id>
        <label>CIC1</label>
    </interactant>
    <organismsDiffer>false</organismsDiffer>
    <experiments>4</experiments>
</comment>
<comment type="interaction">
    <interactant intactId="EBI-28853">
        <id>P53927</id>
    </interactant>
    <interactant intactId="EBI-8170">
        <id>Q03532</id>
        <label>HAS1</label>
    </interactant>
    <organismsDiffer>false</organismsDiffer>
    <experiments>5</experiments>
</comment>
<comment type="interaction">
    <interactant intactId="EBI-28853">
        <id>P53927</id>
    </interactant>
    <interactant intactId="EBI-29259">
        <id>P39744</id>
        <label>NOC2</label>
    </interactant>
    <organismsDiffer>false</organismsDiffer>
    <experiments>3</experiments>
</comment>
<comment type="interaction">
    <interactant intactId="EBI-28853">
        <id>P53927</id>
    </interactant>
    <interactant intactId="EBI-22681">
        <id>P40078</id>
        <label>NSA2</label>
    </interactant>
    <organismsDiffer>false</organismsDiffer>
    <experiments>4</experiments>
</comment>
<comment type="interaction">
    <interactant intactId="EBI-28853">
        <id>P53927</id>
    </interactant>
    <interactant intactId="EBI-505">
        <id>P53131</id>
        <label>PRP43</label>
    </interactant>
    <organismsDiffer>false</organismsDiffer>
    <experiments>3</experiments>
</comment>
<comment type="subcellular location">
    <subcellularLocation>
        <location evidence="4">Cytoplasm</location>
    </subcellularLocation>
    <subcellularLocation>
        <location evidence="3 4">Nucleus</location>
        <location evidence="3 4">Nucleolus</location>
    </subcellularLocation>
</comment>
<comment type="disruption phenotype">
    <text evidence="3 6">Essential gene. Abrupt growth arrest prior to substantial depletion of ribosomal subunits. Fails to synthesize the 25S and 5.8S rRNA components of the 60S ribosomal subunit, and exonucleolytic 5' processing of 5.8S rRNA is strongly inhibited. Arrests at cytokinesis and fails to assemble a contractile actin ring at the bud neck.</text>
</comment>
<comment type="miscellaneous">
    <text evidence="5">Present with 4280 molecules/cell in log phase SD medium.</text>
</comment>
<organism>
    <name type="scientific">Saccharomyces cerevisiae (strain ATCC 204508 / S288c)</name>
    <name type="common">Baker's yeast</name>
    <dbReference type="NCBI Taxonomy" id="559292"/>
    <lineage>
        <taxon>Eukaryota</taxon>
        <taxon>Fungi</taxon>
        <taxon>Dikarya</taxon>
        <taxon>Ascomycota</taxon>
        <taxon>Saccharomycotina</taxon>
        <taxon>Saccharomycetes</taxon>
        <taxon>Saccharomycetales</taxon>
        <taxon>Saccharomycetaceae</taxon>
        <taxon>Saccharomyces</taxon>
    </lineage>
</organism>
<protein>
    <recommendedName>
        <fullName>Ribosome biogenesis protein 15</fullName>
    </recommendedName>
    <alternativeName>
        <fullName evidence="8">Nucleolar protein 15</fullName>
    </alternativeName>
</protein>
<dbReference type="EMBL" id="Z69382">
    <property type="protein sequence ID" value="CAA93397.1"/>
    <property type="molecule type" value="Genomic_DNA"/>
</dbReference>
<dbReference type="EMBL" id="Z71386">
    <property type="protein sequence ID" value="CAA95989.1"/>
    <property type="molecule type" value="Genomic_DNA"/>
</dbReference>
<dbReference type="EMBL" id="AY693098">
    <property type="protein sequence ID" value="AAT93117.1"/>
    <property type="molecule type" value="Genomic_DNA"/>
</dbReference>
<dbReference type="EMBL" id="BK006947">
    <property type="protein sequence ID" value="DAA10437.1"/>
    <property type="molecule type" value="Genomic_DNA"/>
</dbReference>
<dbReference type="PIR" id="S63051">
    <property type="entry name" value="S63051"/>
</dbReference>
<dbReference type="RefSeq" id="NP_014289.1">
    <property type="nucleotide sequence ID" value="NM_001182948.1"/>
</dbReference>
<dbReference type="PDB" id="3JCT">
    <property type="method" value="EM"/>
    <property type="resolution" value="3.08 A"/>
    <property type="chains" value="o=1-220"/>
</dbReference>
<dbReference type="PDB" id="5T9P">
    <property type="method" value="X-ray"/>
    <property type="resolution" value="2.00 A"/>
    <property type="chains" value="A/B/C/D=81-191"/>
</dbReference>
<dbReference type="PDB" id="5Z3G">
    <property type="method" value="EM"/>
    <property type="resolution" value="3.65 A"/>
    <property type="chains" value="E=1-220"/>
</dbReference>
<dbReference type="PDB" id="6C0F">
    <property type="method" value="EM"/>
    <property type="resolution" value="3.70 A"/>
    <property type="chains" value="o=1-220"/>
</dbReference>
<dbReference type="PDB" id="6CB1">
    <property type="method" value="EM"/>
    <property type="resolution" value="4.60 A"/>
    <property type="chains" value="o=1-220"/>
</dbReference>
<dbReference type="PDB" id="6ELZ">
    <property type="method" value="EM"/>
    <property type="resolution" value="3.30 A"/>
    <property type="chains" value="o=1-220"/>
</dbReference>
<dbReference type="PDB" id="6EM1">
    <property type="method" value="EM"/>
    <property type="resolution" value="3.60 A"/>
    <property type="chains" value="o=1-220"/>
</dbReference>
<dbReference type="PDB" id="6EM3">
    <property type="method" value="EM"/>
    <property type="resolution" value="3.20 A"/>
    <property type="chains" value="o=1-220"/>
</dbReference>
<dbReference type="PDB" id="6EM4">
    <property type="method" value="EM"/>
    <property type="resolution" value="4.10 A"/>
    <property type="chains" value="o=1-220"/>
</dbReference>
<dbReference type="PDB" id="6EM5">
    <property type="method" value="EM"/>
    <property type="resolution" value="4.30 A"/>
    <property type="chains" value="o=1-220"/>
</dbReference>
<dbReference type="PDB" id="6M62">
    <property type="method" value="EM"/>
    <property type="resolution" value="3.20 A"/>
    <property type="chains" value="o=1-220"/>
</dbReference>
<dbReference type="PDB" id="6YLX">
    <property type="method" value="EM"/>
    <property type="resolution" value="3.90 A"/>
    <property type="chains" value="o=1-220"/>
</dbReference>
<dbReference type="PDB" id="6YLY">
    <property type="method" value="EM"/>
    <property type="resolution" value="3.80 A"/>
    <property type="chains" value="o=1-220"/>
</dbReference>
<dbReference type="PDB" id="7BTB">
    <property type="method" value="EM"/>
    <property type="resolution" value="3.22 A"/>
    <property type="chains" value="o=1-220"/>
</dbReference>
<dbReference type="PDB" id="7NAC">
    <property type="method" value="EM"/>
    <property type="resolution" value="3.04 A"/>
    <property type="chains" value="o=1-220"/>
</dbReference>
<dbReference type="PDB" id="7OHP">
    <property type="method" value="EM"/>
    <property type="resolution" value="3.90 A"/>
    <property type="chains" value="o=1-220"/>
</dbReference>
<dbReference type="PDB" id="7OHQ">
    <property type="method" value="EM"/>
    <property type="resolution" value="3.10 A"/>
    <property type="chains" value="o=1-220"/>
</dbReference>
<dbReference type="PDB" id="7OHR">
    <property type="method" value="EM"/>
    <property type="resolution" value="4.72 A"/>
    <property type="chains" value="o=1-220"/>
</dbReference>
<dbReference type="PDB" id="7OHS">
    <property type="method" value="EM"/>
    <property type="resolution" value="4.38 A"/>
    <property type="chains" value="o=1-220"/>
</dbReference>
<dbReference type="PDB" id="7OHV">
    <property type="method" value="EM"/>
    <property type="resolution" value="3.90 A"/>
    <property type="chains" value="o=1-220"/>
</dbReference>
<dbReference type="PDB" id="7OHW">
    <property type="method" value="EM"/>
    <property type="resolution" value="3.50 A"/>
    <property type="chains" value="o=1-220"/>
</dbReference>
<dbReference type="PDB" id="7OHX">
    <property type="method" value="EM"/>
    <property type="resolution" value="3.30 A"/>
    <property type="chains" value="o=1-220"/>
</dbReference>
<dbReference type="PDB" id="7R6Q">
    <property type="method" value="EM"/>
    <property type="resolution" value="2.98 A"/>
    <property type="chains" value="o=1-220"/>
</dbReference>
<dbReference type="PDB" id="7R7A">
    <property type="method" value="EM"/>
    <property type="resolution" value="3.04 A"/>
    <property type="chains" value="o=1-220"/>
</dbReference>
<dbReference type="PDB" id="7U0H">
    <property type="method" value="EM"/>
    <property type="resolution" value="2.76 A"/>
    <property type="chains" value="o=1-220"/>
</dbReference>
<dbReference type="PDB" id="7UOO">
    <property type="method" value="EM"/>
    <property type="resolution" value="2.34 A"/>
    <property type="chains" value="o=1-220"/>
</dbReference>
<dbReference type="PDB" id="7UQB">
    <property type="method" value="EM"/>
    <property type="resolution" value="2.43 A"/>
    <property type="chains" value="o=1-220"/>
</dbReference>
<dbReference type="PDB" id="7UQZ">
    <property type="method" value="EM"/>
    <property type="resolution" value="2.44 A"/>
    <property type="chains" value="o=1-220"/>
</dbReference>
<dbReference type="PDB" id="7V08">
    <property type="method" value="EM"/>
    <property type="resolution" value="2.36 A"/>
    <property type="chains" value="o=1-220"/>
</dbReference>
<dbReference type="PDB" id="8E5T">
    <property type="method" value="EM"/>
    <property type="resolution" value="4.00 A"/>
    <property type="chains" value="o=1-220"/>
</dbReference>
<dbReference type="PDB" id="8V83">
    <property type="method" value="EM"/>
    <property type="resolution" value="2.53 A"/>
    <property type="chains" value="o=1-220"/>
</dbReference>
<dbReference type="PDB" id="8V84">
    <property type="method" value="EM"/>
    <property type="resolution" value="2.70 A"/>
    <property type="chains" value="o=1-220"/>
</dbReference>
<dbReference type="PDB" id="8V87">
    <property type="method" value="EM"/>
    <property type="resolution" value="2.66 A"/>
    <property type="chains" value="o=1-220"/>
</dbReference>
<dbReference type="PDBsum" id="3JCT"/>
<dbReference type="PDBsum" id="5T9P"/>
<dbReference type="PDBsum" id="5Z3G"/>
<dbReference type="PDBsum" id="6C0F"/>
<dbReference type="PDBsum" id="6CB1"/>
<dbReference type="PDBsum" id="6ELZ"/>
<dbReference type="PDBsum" id="6EM1"/>
<dbReference type="PDBsum" id="6EM3"/>
<dbReference type="PDBsum" id="6EM4"/>
<dbReference type="PDBsum" id="6EM5"/>
<dbReference type="PDBsum" id="6M62"/>
<dbReference type="PDBsum" id="6YLX"/>
<dbReference type="PDBsum" id="6YLY"/>
<dbReference type="PDBsum" id="7BTB"/>
<dbReference type="PDBsum" id="7NAC"/>
<dbReference type="PDBsum" id="7OHP"/>
<dbReference type="PDBsum" id="7OHQ"/>
<dbReference type="PDBsum" id="7OHR"/>
<dbReference type="PDBsum" id="7OHS"/>
<dbReference type="PDBsum" id="7OHV"/>
<dbReference type="PDBsum" id="7OHW"/>
<dbReference type="PDBsum" id="7OHX"/>
<dbReference type="PDBsum" id="7R6Q"/>
<dbReference type="PDBsum" id="7R7A"/>
<dbReference type="PDBsum" id="7U0H"/>
<dbReference type="PDBsum" id="7UOO"/>
<dbReference type="PDBsum" id="7UQB"/>
<dbReference type="PDBsum" id="7UQZ"/>
<dbReference type="PDBsum" id="7V08"/>
<dbReference type="PDBsum" id="8E5T"/>
<dbReference type="PDBsum" id="8V83"/>
<dbReference type="PDBsum" id="8V84"/>
<dbReference type="PDBsum" id="8V87"/>
<dbReference type="EMDB" id="EMD-10841"/>
<dbReference type="EMDB" id="EMD-10842"/>
<dbReference type="EMDB" id="EMD-12904"/>
<dbReference type="EMDB" id="EMD-12905"/>
<dbReference type="EMDB" id="EMD-12906"/>
<dbReference type="EMDB" id="EMD-12907"/>
<dbReference type="EMDB" id="EMD-12910"/>
<dbReference type="EMDB" id="EMD-12911"/>
<dbReference type="EMDB" id="EMD-12912"/>
<dbReference type="EMDB" id="EMD-24269"/>
<dbReference type="EMDB" id="EMD-24286"/>
<dbReference type="EMDB" id="EMD-24296"/>
<dbReference type="EMDB" id="EMD-26259"/>
<dbReference type="EMDB" id="EMD-26651"/>
<dbReference type="EMDB" id="EMD-26686"/>
<dbReference type="EMDB" id="EMD-26703"/>
<dbReference type="EMDB" id="EMD-26941"/>
<dbReference type="EMDB" id="EMD-27919"/>
<dbReference type="EMDB" id="EMD-30108"/>
<dbReference type="EMDB" id="EMD-30174"/>
<dbReference type="EMDB" id="EMD-43017"/>
<dbReference type="EMDB" id="EMD-43021"/>
<dbReference type="EMDB" id="EMD-43027"/>
<dbReference type="EMDB" id="EMD-6878"/>
<dbReference type="EMDB" id="EMD-7324"/>
<dbReference type="EMDB" id="EMD-7445"/>
<dbReference type="SASBDB" id="P53927"/>
<dbReference type="SMR" id="P53927"/>
<dbReference type="BioGRID" id="35715">
    <property type="interactions" value="264"/>
</dbReference>
<dbReference type="DIP" id="DIP-4741N"/>
<dbReference type="FunCoup" id="P53927">
    <property type="interactions" value="1060"/>
</dbReference>
<dbReference type="IntAct" id="P53927">
    <property type="interactions" value="90"/>
</dbReference>
<dbReference type="MINT" id="P53927"/>
<dbReference type="STRING" id="4932.YNL110C"/>
<dbReference type="iPTMnet" id="P53927"/>
<dbReference type="PaxDb" id="4932-YNL110C"/>
<dbReference type="PeptideAtlas" id="P53927"/>
<dbReference type="EnsemblFungi" id="YNL110C_mRNA">
    <property type="protein sequence ID" value="YNL110C"/>
    <property type="gene ID" value="YNL110C"/>
</dbReference>
<dbReference type="GeneID" id="855613"/>
<dbReference type="KEGG" id="sce:YNL110C"/>
<dbReference type="AGR" id="SGD:S000005054"/>
<dbReference type="SGD" id="S000005054">
    <property type="gene designation" value="NOP15"/>
</dbReference>
<dbReference type="VEuPathDB" id="FungiDB:YNL110C"/>
<dbReference type="eggNOG" id="KOG4208">
    <property type="taxonomic scope" value="Eukaryota"/>
</dbReference>
<dbReference type="GeneTree" id="ENSGT00940000172371"/>
<dbReference type="HOGENOM" id="CLU_025741_2_0_1"/>
<dbReference type="InParanoid" id="P53927"/>
<dbReference type="OMA" id="HGFHEKE"/>
<dbReference type="OrthoDB" id="21467at2759"/>
<dbReference type="BioCyc" id="YEAST:G3O-33134-MONOMER"/>
<dbReference type="BioGRID-ORCS" id="855613">
    <property type="hits" value="9 hits in 10 CRISPR screens"/>
</dbReference>
<dbReference type="CD-CODE" id="BDAE0F88">
    <property type="entry name" value="Nucleolus"/>
</dbReference>
<dbReference type="PRO" id="PR:P53927"/>
<dbReference type="Proteomes" id="UP000002311">
    <property type="component" value="Chromosome XIV"/>
</dbReference>
<dbReference type="RNAct" id="P53927">
    <property type="molecule type" value="protein"/>
</dbReference>
<dbReference type="GO" id="GO:0005737">
    <property type="term" value="C:cytoplasm"/>
    <property type="evidence" value="ECO:0007669"/>
    <property type="project" value="UniProtKB-SubCell"/>
</dbReference>
<dbReference type="GO" id="GO:0005730">
    <property type="term" value="C:nucleolus"/>
    <property type="evidence" value="ECO:0000314"/>
    <property type="project" value="SGD"/>
</dbReference>
<dbReference type="GO" id="GO:0005634">
    <property type="term" value="C:nucleus"/>
    <property type="evidence" value="ECO:0000314"/>
    <property type="project" value="SGD"/>
</dbReference>
<dbReference type="GO" id="GO:0030687">
    <property type="term" value="C:preribosome, large subunit precursor"/>
    <property type="evidence" value="ECO:0000314"/>
    <property type="project" value="SGD"/>
</dbReference>
<dbReference type="GO" id="GO:0043023">
    <property type="term" value="F:ribosomal large subunit binding"/>
    <property type="evidence" value="ECO:0000314"/>
    <property type="project" value="SGD"/>
</dbReference>
<dbReference type="GO" id="GO:0003723">
    <property type="term" value="F:RNA binding"/>
    <property type="evidence" value="ECO:0000269"/>
    <property type="project" value="DisProt"/>
</dbReference>
<dbReference type="GO" id="GO:0019843">
    <property type="term" value="F:rRNA binding"/>
    <property type="evidence" value="ECO:0000314"/>
    <property type="project" value="GO_Central"/>
</dbReference>
<dbReference type="GO" id="GO:0000463">
    <property type="term" value="P:maturation of LSU-rRNA from tricistronic rRNA transcript (SSU-rRNA, 5.8S rRNA, LSU-rRNA)"/>
    <property type="evidence" value="ECO:0000315"/>
    <property type="project" value="GO_Central"/>
</dbReference>
<dbReference type="GO" id="GO:0042273">
    <property type="term" value="P:ribosomal large subunit biogenesis"/>
    <property type="evidence" value="ECO:0000314"/>
    <property type="project" value="SGD"/>
</dbReference>
<dbReference type="GO" id="GO:0006364">
    <property type="term" value="P:rRNA processing"/>
    <property type="evidence" value="ECO:0000314"/>
    <property type="project" value="SGD"/>
</dbReference>
<dbReference type="CDD" id="cd12552">
    <property type="entry name" value="RRM_Nop15p"/>
    <property type="match status" value="1"/>
</dbReference>
<dbReference type="DisProt" id="DP02808"/>
<dbReference type="FunFam" id="3.30.70.330:FF:001035">
    <property type="entry name" value="Ribosome biogenesis"/>
    <property type="match status" value="1"/>
</dbReference>
<dbReference type="Gene3D" id="3.30.70.330">
    <property type="match status" value="1"/>
</dbReference>
<dbReference type="InterPro" id="IPR034469">
    <property type="entry name" value="Nop15_RRM"/>
</dbReference>
<dbReference type="InterPro" id="IPR012677">
    <property type="entry name" value="Nucleotide-bd_a/b_plait_sf"/>
</dbReference>
<dbReference type="InterPro" id="IPR035979">
    <property type="entry name" value="RBD_domain_sf"/>
</dbReference>
<dbReference type="InterPro" id="IPR000504">
    <property type="entry name" value="RRM_dom"/>
</dbReference>
<dbReference type="PANTHER" id="PTHR46754">
    <property type="entry name" value="MKI67 FHA DOMAIN-INTERACTING NUCLEOLAR PHOSPHOPROTEIN"/>
    <property type="match status" value="1"/>
</dbReference>
<dbReference type="Pfam" id="PF00076">
    <property type="entry name" value="RRM_1"/>
    <property type="match status" value="1"/>
</dbReference>
<dbReference type="SMART" id="SM00360">
    <property type="entry name" value="RRM"/>
    <property type="match status" value="1"/>
</dbReference>
<dbReference type="SUPFAM" id="SSF54928">
    <property type="entry name" value="RNA-binding domain, RBD"/>
    <property type="match status" value="1"/>
</dbReference>
<dbReference type="PROSITE" id="PS50102">
    <property type="entry name" value="RRM"/>
    <property type="match status" value="1"/>
</dbReference>
<gene>
    <name evidence="8" type="primary">NOP15</name>
    <name type="ordered locus">YNL110C</name>
    <name type="ORF">N1954</name>
</gene>
<keyword id="KW-0002">3D-structure</keyword>
<keyword id="KW-0963">Cytoplasm</keyword>
<keyword id="KW-0539">Nucleus</keyword>
<keyword id="KW-1185">Reference proteome</keyword>
<keyword id="KW-0687">Ribonucleoprotein</keyword>
<keyword id="KW-0690">Ribosome biogenesis</keyword>
<keyword id="KW-0694">RNA-binding</keyword>
<keyword id="KW-0698">rRNA processing</keyword>
<evidence type="ECO:0000255" key="1">
    <source>
        <dbReference type="PROSITE-ProRule" id="PRU00176"/>
    </source>
</evidence>
<evidence type="ECO:0000256" key="2">
    <source>
        <dbReference type="SAM" id="MobiDB-lite"/>
    </source>
</evidence>
<evidence type="ECO:0000269" key="3">
    <source>
    </source>
</evidence>
<evidence type="ECO:0000269" key="4">
    <source>
    </source>
</evidence>
<evidence type="ECO:0000269" key="5">
    <source>
    </source>
</evidence>
<evidence type="ECO:0000269" key="6">
    <source>
    </source>
</evidence>
<evidence type="ECO:0000269" key="7">
    <source>
    </source>
</evidence>
<evidence type="ECO:0000303" key="8">
    <source>
    </source>
</evidence>
<evidence type="ECO:0007829" key="9">
    <source>
        <dbReference type="PDB" id="5T9P"/>
    </source>
</evidence>
<evidence type="ECO:0007829" key="10">
    <source>
        <dbReference type="PDB" id="7R6Q"/>
    </source>
</evidence>
<reference key="1">
    <citation type="journal article" date="1997" name="Nature">
        <title>The nucleotide sequence of Saccharomyces cerevisiae chromosome XIV and its evolutionary implications.</title>
        <authorList>
            <person name="Philippsen P."/>
            <person name="Kleine K."/>
            <person name="Poehlmann R."/>
            <person name="Duesterhoeft A."/>
            <person name="Hamberg K."/>
            <person name="Hegemann J.H."/>
            <person name="Obermaier B."/>
            <person name="Urrestarazu L.A."/>
            <person name="Aert R."/>
            <person name="Albermann K."/>
            <person name="Altmann R."/>
            <person name="Andre B."/>
            <person name="Baladron V."/>
            <person name="Ballesta J.P.G."/>
            <person name="Becam A.-M."/>
            <person name="Beinhauer J.D."/>
            <person name="Boskovic J."/>
            <person name="Buitrago M.J."/>
            <person name="Bussereau F."/>
            <person name="Coster F."/>
            <person name="Crouzet M."/>
            <person name="D'Angelo M."/>
            <person name="Dal Pero F."/>
            <person name="De Antoni A."/>
            <person name="del Rey F."/>
            <person name="Doignon F."/>
            <person name="Domdey H."/>
            <person name="Dubois E."/>
            <person name="Fiedler T.A."/>
            <person name="Fleig U."/>
            <person name="Floeth M."/>
            <person name="Fritz C."/>
            <person name="Gaillardin C."/>
            <person name="Garcia-Cantalejo J.M."/>
            <person name="Glansdorff N."/>
            <person name="Goffeau A."/>
            <person name="Gueldener U."/>
            <person name="Herbert C.J."/>
            <person name="Heumann K."/>
            <person name="Heuss-Neitzel D."/>
            <person name="Hilbert H."/>
            <person name="Hinni K."/>
            <person name="Iraqui Houssaini I."/>
            <person name="Jacquet M."/>
            <person name="Jimenez A."/>
            <person name="Jonniaux J.-L."/>
            <person name="Karpfinger-Hartl L."/>
            <person name="Lanfranchi G."/>
            <person name="Lepingle A."/>
            <person name="Levesque H."/>
            <person name="Lyck R."/>
            <person name="Maftahi M."/>
            <person name="Mallet L."/>
            <person name="Maurer C.T.C."/>
            <person name="Messenguy F."/>
            <person name="Mewes H.-W."/>
            <person name="Moestl D."/>
            <person name="Nasr F."/>
            <person name="Nicaud J.-M."/>
            <person name="Niedenthal R.K."/>
            <person name="Pandolfo D."/>
            <person name="Pierard A."/>
            <person name="Piravandi E."/>
            <person name="Planta R.J."/>
            <person name="Pohl T.M."/>
            <person name="Purnelle B."/>
            <person name="Rebischung C."/>
            <person name="Remacha M.A."/>
            <person name="Revuelta J.L."/>
            <person name="Rinke M."/>
            <person name="Saiz J.E."/>
            <person name="Sartorello F."/>
            <person name="Scherens B."/>
            <person name="Sen-Gupta M."/>
            <person name="Soler-Mira A."/>
            <person name="Urbanus J.H.M."/>
            <person name="Valle G."/>
            <person name="Van Dyck L."/>
            <person name="Verhasselt P."/>
            <person name="Vierendeels F."/>
            <person name="Vissers S."/>
            <person name="Voet M."/>
            <person name="Volckaert G."/>
            <person name="Wach A."/>
            <person name="Wambutt R."/>
            <person name="Wedler H."/>
            <person name="Zollner A."/>
            <person name="Hani J."/>
        </authorList>
    </citation>
    <scope>NUCLEOTIDE SEQUENCE [LARGE SCALE GENOMIC DNA]</scope>
    <source>
        <strain>ATCC 204508 / S288c</strain>
    </source>
</reference>
<reference key="2">
    <citation type="journal article" date="2014" name="G3 (Bethesda)">
        <title>The reference genome sequence of Saccharomyces cerevisiae: Then and now.</title>
        <authorList>
            <person name="Engel S.R."/>
            <person name="Dietrich F.S."/>
            <person name="Fisk D.G."/>
            <person name="Binkley G."/>
            <person name="Balakrishnan R."/>
            <person name="Costanzo M.C."/>
            <person name="Dwight S.S."/>
            <person name="Hitz B.C."/>
            <person name="Karra K."/>
            <person name="Nash R.S."/>
            <person name="Weng S."/>
            <person name="Wong E.D."/>
            <person name="Lloyd P."/>
            <person name="Skrzypek M.S."/>
            <person name="Miyasato S.R."/>
            <person name="Simison M."/>
            <person name="Cherry J.M."/>
        </authorList>
    </citation>
    <scope>GENOME REANNOTATION</scope>
    <source>
        <strain>ATCC 204508 / S288c</strain>
    </source>
</reference>
<reference key="3">
    <citation type="journal article" date="2007" name="Genome Res.">
        <title>Approaching a complete repository of sequence-verified protein-encoding clones for Saccharomyces cerevisiae.</title>
        <authorList>
            <person name="Hu Y."/>
            <person name="Rolfs A."/>
            <person name="Bhullar B."/>
            <person name="Murthy T.V.S."/>
            <person name="Zhu C."/>
            <person name="Berger M.F."/>
            <person name="Camargo A.A."/>
            <person name="Kelley F."/>
            <person name="McCarron S."/>
            <person name="Jepson D."/>
            <person name="Richardson A."/>
            <person name="Raphael J."/>
            <person name="Moreira D."/>
            <person name="Taycher E."/>
            <person name="Zuo D."/>
            <person name="Mohr S."/>
            <person name="Kane M.F."/>
            <person name="Williamson J."/>
            <person name="Simpson A.J.G."/>
            <person name="Bulyk M.L."/>
            <person name="Harlow E."/>
            <person name="Marsischky G."/>
            <person name="Kolodner R.D."/>
            <person name="LaBaer J."/>
        </authorList>
    </citation>
    <scope>NUCLEOTIDE SEQUENCE [GENOMIC DNA]</scope>
    <source>
        <strain>ATCC 204508 / S288c</strain>
    </source>
</reference>
<reference key="4">
    <citation type="journal article" date="2000" name="Yeast">
        <title>Gene disruption and basic phenotypic analysis of nine novel yeast genes from chromosome XIV.</title>
        <authorList>
            <person name="Capozzo C."/>
            <person name="Sartorello F."/>
            <person name="Dal Pero F."/>
            <person name="D'Angelo M."/>
            <person name="Vezzi A."/>
            <person name="Campanaro S."/>
            <person name="Valle G."/>
        </authorList>
    </citation>
    <scope>SUBCELLULAR LOCATION</scope>
    <scope>DISRUPTION PHENOTYPE</scope>
</reference>
<reference key="5">
    <citation type="journal article" date="2001" name="Mol. Cell">
        <title>Composition and functional characterization of yeast 66S ribosome assembly intermediates.</title>
        <authorList>
            <person name="Harnpicharnchai P."/>
            <person name="Jakovljevic J."/>
            <person name="Horsey E."/>
            <person name="Miles T."/>
            <person name="Roman J."/>
            <person name="Rout M."/>
            <person name="Meagher D."/>
            <person name="Imai B."/>
            <person name="Guo Y."/>
            <person name="Brame C.J."/>
            <person name="Shabanowitz J."/>
            <person name="Hunt D.F."/>
            <person name="Woolford J.L. Jr."/>
        </authorList>
    </citation>
    <scope>IDENTIFICATION IN THE PRE-66S RIBOSOMAL PARTICLE</scope>
    <scope>FUNCTION</scope>
    <scope>INTERACTION WITH NOP7</scope>
    <scope>SUBCELLULAR LOCATION</scope>
    <scope>IDENTIFICATION BY MASS SPECTROMETRY</scope>
</reference>
<reference key="6">
    <citation type="journal article" date="2003" name="EMBO J.">
        <title>Yeast Nop15p is an RNA-binding protein required for pre-rRNA processing and cytokinesis.</title>
        <authorList>
            <person name="Oeffinger M."/>
            <person name="Tollervey D."/>
        </authorList>
    </citation>
    <scope>FUNCTION</scope>
    <scope>SUBUNIT</scope>
    <scope>RNA-BINDING</scope>
    <scope>DISRUPTION PHENOTYPE</scope>
</reference>
<reference key="7">
    <citation type="journal article" date="2003" name="Nature">
        <title>Global analysis of protein expression in yeast.</title>
        <authorList>
            <person name="Ghaemmaghami S."/>
            <person name="Huh W.-K."/>
            <person name="Bower K."/>
            <person name="Howson R.W."/>
            <person name="Belle A."/>
            <person name="Dephoure N."/>
            <person name="O'Shea E.K."/>
            <person name="Weissman J.S."/>
        </authorList>
    </citation>
    <scope>LEVEL OF PROTEIN EXPRESSION [LARGE SCALE ANALYSIS]</scope>
</reference>
<reference key="8">
    <citation type="journal article" date="2004" name="RNA">
        <title>Role of the yeast Rrp1 protein in the dynamics of pre-ribosome maturation.</title>
        <authorList>
            <person name="Horsey E.W."/>
            <person name="Jakovljevic J."/>
            <person name="Miles T.D."/>
            <person name="Harnpicharnchai P."/>
            <person name="Woolford J.L. Jr."/>
        </authorList>
    </citation>
    <scope>INTERACTION WITH RRP1</scope>
    <scope>IDENTIFICATION BY MASS SPECTROMETRY</scope>
</reference>
<proteinExistence type="evidence at protein level"/>
<feature type="chain" id="PRO_0000082035" description="Ribosome biogenesis protein 15">
    <location>
        <begin position="1"/>
        <end position="220"/>
    </location>
</feature>
<feature type="domain" description="RRM" evidence="1">
    <location>
        <begin position="91"/>
        <end position="169"/>
    </location>
</feature>
<feature type="region of interest" description="Disordered" evidence="2">
    <location>
        <begin position="1"/>
        <end position="82"/>
    </location>
</feature>
<feature type="compositionally biased region" description="Basic and acidic residues" evidence="2">
    <location>
        <begin position="9"/>
        <end position="30"/>
    </location>
</feature>
<feature type="compositionally biased region" description="Acidic residues" evidence="2">
    <location>
        <begin position="39"/>
        <end position="60"/>
    </location>
</feature>
<feature type="strand" evidence="9">
    <location>
        <begin position="89"/>
        <end position="96"/>
    </location>
</feature>
<feature type="helix" evidence="9">
    <location>
        <begin position="104"/>
        <end position="111"/>
    </location>
</feature>
<feature type="helix" evidence="9">
    <location>
        <begin position="112"/>
        <end position="114"/>
    </location>
</feature>
<feature type="strand" evidence="9">
    <location>
        <begin position="117"/>
        <end position="124"/>
    </location>
</feature>
<feature type="turn" evidence="9">
    <location>
        <begin position="126"/>
        <end position="128"/>
    </location>
</feature>
<feature type="strand" evidence="9">
    <location>
        <begin position="131"/>
        <end position="141"/>
    </location>
</feature>
<feature type="helix" evidence="9">
    <location>
        <begin position="142"/>
        <end position="152"/>
    </location>
</feature>
<feature type="strand" evidence="9">
    <location>
        <begin position="163"/>
        <end position="168"/>
    </location>
</feature>
<feature type="helix" evidence="9">
    <location>
        <begin position="173"/>
        <end position="176"/>
    </location>
</feature>
<feature type="helix" evidence="9">
    <location>
        <begin position="181"/>
        <end position="186"/>
    </location>
</feature>
<feature type="turn" evidence="9">
    <location>
        <begin position="187"/>
        <end position="190"/>
    </location>
</feature>
<feature type="helix" evidence="10">
    <location>
        <begin position="193"/>
        <end position="210"/>
    </location>
</feature>
<feature type="helix" evidence="10">
    <location>
        <begin position="211"/>
        <end position="214"/>
    </location>
</feature>
<accession>P53927</accession>
<accession>D6W171</accession>
<sequence length="220" mass="25447">MVKSTSKTSTKETVTKQPTEEKPIQEKEELALETSSSSSDEEDEKDEDEIEGLAASDDEQSGTHKIKRLNPKKQANEKKSKDKKTLEEYSGIIYVSRLPHGFHEKELSKYFAQFGDLKEVRLARNKKTGNSRHYGFLEFVNKEDAMIAQESMNNYLLMGHLLQVRVLPKGAKIEKLYKYKKRVLVEKGITKPVKQLKDNMKQKHEERIKKLAKSGIEFKW</sequence>